<keyword id="KW-0067">ATP-binding</keyword>
<keyword id="KW-0175">Coiled coil</keyword>
<keyword id="KW-0963">Cytoplasm</keyword>
<keyword id="KW-0238">DNA-binding</keyword>
<keyword id="KW-0547">Nucleotide-binding</keyword>
<name>SMC_CLOK1</name>
<accession>B9E1H0</accession>
<organism>
    <name type="scientific">Clostridium kluyveri (strain NBRC 12016)</name>
    <dbReference type="NCBI Taxonomy" id="583346"/>
    <lineage>
        <taxon>Bacteria</taxon>
        <taxon>Bacillati</taxon>
        <taxon>Bacillota</taxon>
        <taxon>Clostridia</taxon>
        <taxon>Eubacteriales</taxon>
        <taxon>Clostridiaceae</taxon>
        <taxon>Clostridium</taxon>
    </lineage>
</organism>
<sequence length="1185" mass="136916">MSMFLKTIEIKGFKSFADKTELIFTGGITSIVGPNGSGKSNISDAVRWVLGEQSVKTLRGGKMEDVIFAGTQFRKPLGLCQVSLTLDNEDKKLSLEYSNITVSRRLYRSGESEYYINNVQCRLRDIHELFMDTGIGREGYSIIGQGRIDALLSGKQEDRRLLLEEAAGIVKFRWRRSEAEKKLENTEVNLIRIEDILHTYEERLKPLELENKKADEFLRLSEELKDKEKTVLIYSLKKIQHKIDKLESSMERITSSNRESHLELTKLREDVNGYNIRMENIMDESTRCEKDYYDKRELINQGENKIKLLKQKIEDLEDNIKRNYLELKQIENDKIKKSEGITLQNQNLLELKNREKEVNIGILDYENNIKKIEKDIYSRENICKKLKEDKIQYFSNISKLRNHIISIKKDGENIVEKIDKLKSSYESYSKAIIISSEKKNKLLGEISNIKKNISVYQNKIDENNSGILELTNVLNLKENSLQKLNALYNTLEANYKMLVNFHKHYEGYNRTVKALMENIKNHKLDVPAQSCFLVGEIISLQKKFETCIEISLGNSISSVITNNEIIAKIIIKYLKDNKMGRATFLPISIIKGRKISNLHKFEDIKGFIGVASELVSYSKEFKDVLDYILGRTIICENIDNAFEIAKLAEYSFKIVTLSGDVVNSGGAITGGSLQKRSSNIIGRKREIEETLVKIENTKETLQVLNGDIRRIKSDKEKLHCQNEDFKEKIHLDNIELTKLHQQNDTIERETKKLIESRETANREIKLLYKNKEVNLNELQEEEKKLKEYSKEEIKNDDYILKMEEELKEGRNRITDLKEGLTSLKVKRAQISENILSSERELSRLDQEIKSMDIKNRSIVEEIKLSEKIIHKNELNMYSNEKEVKDLKQYMEKLQESIEKSHVKTIELKQKINVSNEKVDNLTLIINKKETSFHKIQLELTKLNSQKDNIYSRLKEDMNITCDGDIEYDVQIENLEEYKSKIVHLKSSISKLGVVNLGAIEEYKNLQKKITFLSSQKEDLIKSKQELKKVIDAMTEKMKGVFKENFVKLKKNFNDTFRELFKGGSADLVLTKGDELTGNIDITVQPPGKKLQNINLMSGGEKGLSAIALLFAMLKIKPTPFCILDEIEASLDDANVLRYAEFLRKFSRDTQFIVITHRKGTMEVSDVLYGVTMEEKGVSKIISLKL</sequence>
<reference key="1">
    <citation type="submission" date="2005-09" db="EMBL/GenBank/DDBJ databases">
        <title>Complete genome sequence of Clostridium kluyveri and comparative genomics of Clostridia species.</title>
        <authorList>
            <person name="Inui M."/>
            <person name="Nonaka H."/>
            <person name="Shinoda Y."/>
            <person name="Ikenaga Y."/>
            <person name="Abe M."/>
            <person name="Naito K."/>
            <person name="Vertes A.A."/>
            <person name="Yukawa H."/>
        </authorList>
    </citation>
    <scope>NUCLEOTIDE SEQUENCE [LARGE SCALE GENOMIC DNA]</scope>
    <source>
        <strain>NBRC 12016</strain>
    </source>
</reference>
<protein>
    <recommendedName>
        <fullName evidence="1">Chromosome partition protein Smc</fullName>
    </recommendedName>
</protein>
<gene>
    <name evidence="1" type="primary">smc</name>
    <name type="ordered locus">CKR_1294</name>
</gene>
<evidence type="ECO:0000255" key="1">
    <source>
        <dbReference type="HAMAP-Rule" id="MF_01894"/>
    </source>
</evidence>
<dbReference type="EMBL" id="AP009049">
    <property type="protein sequence ID" value="BAH06345.1"/>
    <property type="molecule type" value="Genomic_DNA"/>
</dbReference>
<dbReference type="SMR" id="B9E1H0"/>
<dbReference type="KEGG" id="ckr:CKR_1294"/>
<dbReference type="HOGENOM" id="CLU_001042_2_2_9"/>
<dbReference type="Proteomes" id="UP000007969">
    <property type="component" value="Chromosome"/>
</dbReference>
<dbReference type="GO" id="GO:0005694">
    <property type="term" value="C:chromosome"/>
    <property type="evidence" value="ECO:0007669"/>
    <property type="project" value="InterPro"/>
</dbReference>
<dbReference type="GO" id="GO:0005737">
    <property type="term" value="C:cytoplasm"/>
    <property type="evidence" value="ECO:0007669"/>
    <property type="project" value="UniProtKB-SubCell"/>
</dbReference>
<dbReference type="GO" id="GO:0005524">
    <property type="term" value="F:ATP binding"/>
    <property type="evidence" value="ECO:0007669"/>
    <property type="project" value="UniProtKB-UniRule"/>
</dbReference>
<dbReference type="GO" id="GO:0016887">
    <property type="term" value="F:ATP hydrolysis activity"/>
    <property type="evidence" value="ECO:0007669"/>
    <property type="project" value="InterPro"/>
</dbReference>
<dbReference type="GO" id="GO:0003677">
    <property type="term" value="F:DNA binding"/>
    <property type="evidence" value="ECO:0007669"/>
    <property type="project" value="UniProtKB-UniRule"/>
</dbReference>
<dbReference type="GO" id="GO:0030261">
    <property type="term" value="P:chromosome condensation"/>
    <property type="evidence" value="ECO:0007669"/>
    <property type="project" value="InterPro"/>
</dbReference>
<dbReference type="GO" id="GO:0007059">
    <property type="term" value="P:chromosome segregation"/>
    <property type="evidence" value="ECO:0007669"/>
    <property type="project" value="UniProtKB-UniRule"/>
</dbReference>
<dbReference type="GO" id="GO:0006260">
    <property type="term" value="P:DNA replication"/>
    <property type="evidence" value="ECO:0007669"/>
    <property type="project" value="UniProtKB-UniRule"/>
</dbReference>
<dbReference type="GO" id="GO:0007062">
    <property type="term" value="P:sister chromatid cohesion"/>
    <property type="evidence" value="ECO:0007669"/>
    <property type="project" value="InterPro"/>
</dbReference>
<dbReference type="CDD" id="cd03278">
    <property type="entry name" value="ABC_SMC_barmotin"/>
    <property type="match status" value="1"/>
</dbReference>
<dbReference type="FunFam" id="3.40.50.300:FF:000984">
    <property type="entry name" value="Chromosome partition protein Smc"/>
    <property type="match status" value="1"/>
</dbReference>
<dbReference type="Gene3D" id="1.10.287.2610">
    <property type="match status" value="1"/>
</dbReference>
<dbReference type="Gene3D" id="1.20.1060.20">
    <property type="match status" value="1"/>
</dbReference>
<dbReference type="Gene3D" id="3.30.70.1620">
    <property type="match status" value="1"/>
</dbReference>
<dbReference type="Gene3D" id="3.40.50.300">
    <property type="entry name" value="P-loop containing nucleotide triphosphate hydrolases"/>
    <property type="match status" value="2"/>
</dbReference>
<dbReference type="HAMAP" id="MF_01894">
    <property type="entry name" value="Smc_prok"/>
    <property type="match status" value="1"/>
</dbReference>
<dbReference type="InterPro" id="IPR027417">
    <property type="entry name" value="P-loop_NTPase"/>
</dbReference>
<dbReference type="InterPro" id="IPR003395">
    <property type="entry name" value="RecF/RecN/SMC_N"/>
</dbReference>
<dbReference type="InterPro" id="IPR024704">
    <property type="entry name" value="SMC"/>
</dbReference>
<dbReference type="InterPro" id="IPR010935">
    <property type="entry name" value="SMC_hinge"/>
</dbReference>
<dbReference type="InterPro" id="IPR036277">
    <property type="entry name" value="SMC_hinge_sf"/>
</dbReference>
<dbReference type="InterPro" id="IPR011890">
    <property type="entry name" value="SMC_prok"/>
</dbReference>
<dbReference type="NCBIfam" id="TIGR02168">
    <property type="entry name" value="SMC_prok_B"/>
    <property type="match status" value="1"/>
</dbReference>
<dbReference type="PANTHER" id="PTHR43977">
    <property type="entry name" value="STRUCTURAL MAINTENANCE OF CHROMOSOMES PROTEIN 3"/>
    <property type="match status" value="1"/>
</dbReference>
<dbReference type="Pfam" id="PF06470">
    <property type="entry name" value="SMC_hinge"/>
    <property type="match status" value="1"/>
</dbReference>
<dbReference type="Pfam" id="PF02463">
    <property type="entry name" value="SMC_N"/>
    <property type="match status" value="1"/>
</dbReference>
<dbReference type="PIRSF" id="PIRSF005719">
    <property type="entry name" value="SMC"/>
    <property type="match status" value="1"/>
</dbReference>
<dbReference type="SMART" id="SM00968">
    <property type="entry name" value="SMC_hinge"/>
    <property type="match status" value="1"/>
</dbReference>
<dbReference type="SUPFAM" id="SSF52540">
    <property type="entry name" value="P-loop containing nucleoside triphosphate hydrolases"/>
    <property type="match status" value="1"/>
</dbReference>
<dbReference type="SUPFAM" id="SSF75553">
    <property type="entry name" value="Smc hinge domain"/>
    <property type="match status" value="1"/>
</dbReference>
<feature type="chain" id="PRO_0000409268" description="Chromosome partition protein Smc">
    <location>
        <begin position="1"/>
        <end position="1185"/>
    </location>
</feature>
<feature type="domain" description="SMC hinge">
    <location>
        <begin position="534"/>
        <end position="644"/>
    </location>
</feature>
<feature type="coiled-coil region" evidence="1">
    <location>
        <begin position="174"/>
        <end position="376"/>
    </location>
</feature>
<feature type="coiled-coil region" evidence="1">
    <location>
        <begin position="412"/>
        <end position="526"/>
    </location>
</feature>
<feature type="coiled-coil region" evidence="1">
    <location>
        <begin position="679"/>
        <end position="1039"/>
    </location>
</feature>
<feature type="binding site" evidence="1">
    <location>
        <begin position="34"/>
        <end position="41"/>
    </location>
    <ligand>
        <name>ATP</name>
        <dbReference type="ChEBI" id="CHEBI:30616"/>
    </ligand>
</feature>
<comment type="function">
    <text evidence="1">Required for chromosome condensation and partitioning.</text>
</comment>
<comment type="subunit">
    <text evidence="1">Homodimer.</text>
</comment>
<comment type="subcellular location">
    <subcellularLocation>
        <location evidence="1">Cytoplasm</location>
    </subcellularLocation>
</comment>
<comment type="domain">
    <text evidence="1">Contains large globular domains required for ATP hydrolysis at each terminus and a third globular domain forming a flexible SMC hinge near the middle of the molecule. These domains are separated by coiled-coil structures.</text>
</comment>
<comment type="similarity">
    <text evidence="1">Belongs to the SMC family.</text>
</comment>
<proteinExistence type="inferred from homology"/>